<proteinExistence type="inferred from homology"/>
<organism>
    <name type="scientific">Acidovorax ebreus (strain TPSY)</name>
    <name type="common">Diaphorobacter sp. (strain TPSY)</name>
    <dbReference type="NCBI Taxonomy" id="535289"/>
    <lineage>
        <taxon>Bacteria</taxon>
        <taxon>Pseudomonadati</taxon>
        <taxon>Pseudomonadota</taxon>
        <taxon>Betaproteobacteria</taxon>
        <taxon>Burkholderiales</taxon>
        <taxon>Comamonadaceae</taxon>
        <taxon>Diaphorobacter</taxon>
    </lineage>
</organism>
<feature type="chain" id="PRO_1000195068" description="Dihydroorotate dehydrogenase (quinone)">
    <location>
        <begin position="1"/>
        <end position="351"/>
    </location>
</feature>
<feature type="active site" description="Nucleophile" evidence="1">
    <location>
        <position position="186"/>
    </location>
</feature>
<feature type="binding site" evidence="1">
    <location>
        <begin position="65"/>
        <end position="69"/>
    </location>
    <ligand>
        <name>FMN</name>
        <dbReference type="ChEBI" id="CHEBI:58210"/>
    </ligand>
</feature>
<feature type="binding site" evidence="1">
    <location>
        <position position="69"/>
    </location>
    <ligand>
        <name>substrate</name>
    </ligand>
</feature>
<feature type="binding site" evidence="1">
    <location>
        <position position="89"/>
    </location>
    <ligand>
        <name>FMN</name>
        <dbReference type="ChEBI" id="CHEBI:58210"/>
    </ligand>
</feature>
<feature type="binding site" evidence="1">
    <location>
        <begin position="114"/>
        <end position="118"/>
    </location>
    <ligand>
        <name>substrate</name>
    </ligand>
</feature>
<feature type="binding site" evidence="1">
    <location>
        <position position="150"/>
    </location>
    <ligand>
        <name>FMN</name>
        <dbReference type="ChEBI" id="CHEBI:58210"/>
    </ligand>
</feature>
<feature type="binding site" evidence="1">
    <location>
        <position position="183"/>
    </location>
    <ligand>
        <name>FMN</name>
        <dbReference type="ChEBI" id="CHEBI:58210"/>
    </ligand>
</feature>
<feature type="binding site" evidence="1">
    <location>
        <position position="183"/>
    </location>
    <ligand>
        <name>substrate</name>
    </ligand>
</feature>
<feature type="binding site" evidence="1">
    <location>
        <position position="188"/>
    </location>
    <ligand>
        <name>substrate</name>
    </ligand>
</feature>
<feature type="binding site" evidence="1">
    <location>
        <position position="228"/>
    </location>
    <ligand>
        <name>FMN</name>
        <dbReference type="ChEBI" id="CHEBI:58210"/>
    </ligand>
</feature>
<feature type="binding site" evidence="1">
    <location>
        <position position="256"/>
    </location>
    <ligand>
        <name>FMN</name>
        <dbReference type="ChEBI" id="CHEBI:58210"/>
    </ligand>
</feature>
<feature type="binding site" evidence="1">
    <location>
        <begin position="257"/>
        <end position="258"/>
    </location>
    <ligand>
        <name>substrate</name>
    </ligand>
</feature>
<feature type="binding site" evidence="1">
    <location>
        <position position="279"/>
    </location>
    <ligand>
        <name>FMN</name>
        <dbReference type="ChEBI" id="CHEBI:58210"/>
    </ligand>
</feature>
<feature type="binding site" evidence="1">
    <location>
        <position position="308"/>
    </location>
    <ligand>
        <name>FMN</name>
        <dbReference type="ChEBI" id="CHEBI:58210"/>
    </ligand>
</feature>
<feature type="binding site" evidence="1">
    <location>
        <begin position="329"/>
        <end position="330"/>
    </location>
    <ligand>
        <name>FMN</name>
        <dbReference type="ChEBI" id="CHEBI:58210"/>
    </ligand>
</feature>
<keyword id="KW-1003">Cell membrane</keyword>
<keyword id="KW-0285">Flavoprotein</keyword>
<keyword id="KW-0288">FMN</keyword>
<keyword id="KW-0472">Membrane</keyword>
<keyword id="KW-0560">Oxidoreductase</keyword>
<keyword id="KW-0665">Pyrimidine biosynthesis</keyword>
<keyword id="KW-1185">Reference proteome</keyword>
<evidence type="ECO:0000255" key="1">
    <source>
        <dbReference type="HAMAP-Rule" id="MF_00225"/>
    </source>
</evidence>
<gene>
    <name evidence="1" type="primary">pyrD</name>
    <name type="ordered locus">Dtpsy_1650</name>
</gene>
<accession>B9MIU2</accession>
<protein>
    <recommendedName>
        <fullName evidence="1">Dihydroorotate dehydrogenase (quinone)</fullName>
        <ecNumber evidence="1">1.3.5.2</ecNumber>
    </recommendedName>
    <alternativeName>
        <fullName evidence="1">DHOdehase</fullName>
        <shortName evidence="1">DHOD</shortName>
        <shortName evidence="1">DHODase</shortName>
    </alternativeName>
    <alternativeName>
        <fullName evidence="1">Dihydroorotate oxidase</fullName>
    </alternativeName>
</protein>
<name>PYRD_ACIET</name>
<reference key="1">
    <citation type="submission" date="2009-01" db="EMBL/GenBank/DDBJ databases">
        <title>Complete sequence of Diaphorobacter sp. TPSY.</title>
        <authorList>
            <consortium name="US DOE Joint Genome Institute"/>
            <person name="Lucas S."/>
            <person name="Copeland A."/>
            <person name="Lapidus A."/>
            <person name="Glavina del Rio T."/>
            <person name="Tice H."/>
            <person name="Bruce D."/>
            <person name="Goodwin L."/>
            <person name="Pitluck S."/>
            <person name="Chertkov O."/>
            <person name="Brettin T."/>
            <person name="Detter J.C."/>
            <person name="Han C."/>
            <person name="Larimer F."/>
            <person name="Land M."/>
            <person name="Hauser L."/>
            <person name="Kyrpides N."/>
            <person name="Mikhailova N."/>
            <person name="Coates J.D."/>
        </authorList>
    </citation>
    <scope>NUCLEOTIDE SEQUENCE [LARGE SCALE GENOMIC DNA]</scope>
    <source>
        <strain>TPSY</strain>
    </source>
</reference>
<comment type="function">
    <text evidence="1">Catalyzes the conversion of dihydroorotate to orotate with quinone as electron acceptor.</text>
</comment>
<comment type="catalytic activity">
    <reaction evidence="1">
        <text>(S)-dihydroorotate + a quinone = orotate + a quinol</text>
        <dbReference type="Rhea" id="RHEA:30187"/>
        <dbReference type="ChEBI" id="CHEBI:24646"/>
        <dbReference type="ChEBI" id="CHEBI:30839"/>
        <dbReference type="ChEBI" id="CHEBI:30864"/>
        <dbReference type="ChEBI" id="CHEBI:132124"/>
        <dbReference type="EC" id="1.3.5.2"/>
    </reaction>
</comment>
<comment type="cofactor">
    <cofactor evidence="1">
        <name>FMN</name>
        <dbReference type="ChEBI" id="CHEBI:58210"/>
    </cofactor>
    <text evidence="1">Binds 1 FMN per subunit.</text>
</comment>
<comment type="pathway">
    <text evidence="1">Pyrimidine metabolism; UMP biosynthesis via de novo pathway; orotate from (S)-dihydroorotate (quinone route): step 1/1.</text>
</comment>
<comment type="subunit">
    <text evidence="1">Monomer.</text>
</comment>
<comment type="subcellular location">
    <subcellularLocation>
        <location evidence="1">Cell membrane</location>
        <topology evidence="1">Peripheral membrane protein</topology>
    </subcellularLocation>
</comment>
<comment type="similarity">
    <text evidence="1">Belongs to the dihydroorotate dehydrogenase family. Type 2 subfamily.</text>
</comment>
<dbReference type="EC" id="1.3.5.2" evidence="1"/>
<dbReference type="EMBL" id="CP001392">
    <property type="protein sequence ID" value="ACM33108.1"/>
    <property type="molecule type" value="Genomic_DNA"/>
</dbReference>
<dbReference type="RefSeq" id="WP_015913199.1">
    <property type="nucleotide sequence ID" value="NC_011992.1"/>
</dbReference>
<dbReference type="SMR" id="B9MIU2"/>
<dbReference type="KEGG" id="dia:Dtpsy_1650"/>
<dbReference type="eggNOG" id="COG0167">
    <property type="taxonomic scope" value="Bacteria"/>
</dbReference>
<dbReference type="HOGENOM" id="CLU_013640_2_0_4"/>
<dbReference type="UniPathway" id="UPA00070">
    <property type="reaction ID" value="UER00946"/>
</dbReference>
<dbReference type="Proteomes" id="UP000000450">
    <property type="component" value="Chromosome"/>
</dbReference>
<dbReference type="GO" id="GO:0005737">
    <property type="term" value="C:cytoplasm"/>
    <property type="evidence" value="ECO:0007669"/>
    <property type="project" value="InterPro"/>
</dbReference>
<dbReference type="GO" id="GO:0005886">
    <property type="term" value="C:plasma membrane"/>
    <property type="evidence" value="ECO:0007669"/>
    <property type="project" value="UniProtKB-SubCell"/>
</dbReference>
<dbReference type="GO" id="GO:0106430">
    <property type="term" value="F:dihydroorotate dehydrogenase (quinone) activity"/>
    <property type="evidence" value="ECO:0007669"/>
    <property type="project" value="UniProtKB-EC"/>
</dbReference>
<dbReference type="GO" id="GO:0006207">
    <property type="term" value="P:'de novo' pyrimidine nucleobase biosynthetic process"/>
    <property type="evidence" value="ECO:0007669"/>
    <property type="project" value="InterPro"/>
</dbReference>
<dbReference type="GO" id="GO:0044205">
    <property type="term" value="P:'de novo' UMP biosynthetic process"/>
    <property type="evidence" value="ECO:0007669"/>
    <property type="project" value="UniProtKB-UniRule"/>
</dbReference>
<dbReference type="CDD" id="cd04738">
    <property type="entry name" value="DHOD_2_like"/>
    <property type="match status" value="1"/>
</dbReference>
<dbReference type="Gene3D" id="3.20.20.70">
    <property type="entry name" value="Aldolase class I"/>
    <property type="match status" value="1"/>
</dbReference>
<dbReference type="HAMAP" id="MF_00225">
    <property type="entry name" value="DHO_dh_type2"/>
    <property type="match status" value="1"/>
</dbReference>
<dbReference type="InterPro" id="IPR013785">
    <property type="entry name" value="Aldolase_TIM"/>
</dbReference>
<dbReference type="InterPro" id="IPR050074">
    <property type="entry name" value="DHO_dehydrogenase"/>
</dbReference>
<dbReference type="InterPro" id="IPR012135">
    <property type="entry name" value="Dihydroorotate_DH_1_2"/>
</dbReference>
<dbReference type="InterPro" id="IPR005719">
    <property type="entry name" value="Dihydroorotate_DH_2"/>
</dbReference>
<dbReference type="InterPro" id="IPR005720">
    <property type="entry name" value="Dihydroorotate_DH_cat"/>
</dbReference>
<dbReference type="InterPro" id="IPR001295">
    <property type="entry name" value="Dihydroorotate_DH_CS"/>
</dbReference>
<dbReference type="NCBIfam" id="NF003644">
    <property type="entry name" value="PRK05286.1-1"/>
    <property type="match status" value="1"/>
</dbReference>
<dbReference type="NCBIfam" id="NF003645">
    <property type="entry name" value="PRK05286.1-2"/>
    <property type="match status" value="1"/>
</dbReference>
<dbReference type="NCBIfam" id="NF003646">
    <property type="entry name" value="PRK05286.1-4"/>
    <property type="match status" value="1"/>
</dbReference>
<dbReference type="NCBIfam" id="NF003652">
    <property type="entry name" value="PRK05286.2-5"/>
    <property type="match status" value="1"/>
</dbReference>
<dbReference type="NCBIfam" id="TIGR01036">
    <property type="entry name" value="pyrD_sub2"/>
    <property type="match status" value="1"/>
</dbReference>
<dbReference type="PANTHER" id="PTHR48109:SF4">
    <property type="entry name" value="DIHYDROOROTATE DEHYDROGENASE (QUINONE), MITOCHONDRIAL"/>
    <property type="match status" value="1"/>
</dbReference>
<dbReference type="PANTHER" id="PTHR48109">
    <property type="entry name" value="DIHYDROOROTATE DEHYDROGENASE (QUINONE), MITOCHONDRIAL-RELATED"/>
    <property type="match status" value="1"/>
</dbReference>
<dbReference type="Pfam" id="PF01180">
    <property type="entry name" value="DHO_dh"/>
    <property type="match status" value="1"/>
</dbReference>
<dbReference type="PIRSF" id="PIRSF000164">
    <property type="entry name" value="DHO_oxidase"/>
    <property type="match status" value="1"/>
</dbReference>
<dbReference type="SUPFAM" id="SSF51395">
    <property type="entry name" value="FMN-linked oxidoreductases"/>
    <property type="match status" value="1"/>
</dbReference>
<dbReference type="PROSITE" id="PS00911">
    <property type="entry name" value="DHODEHASE_1"/>
    <property type="match status" value="1"/>
</dbReference>
<dbReference type="PROSITE" id="PS00912">
    <property type="entry name" value="DHODEHASE_2"/>
    <property type="match status" value="1"/>
</dbReference>
<sequence length="351" mass="37375">MSLLPYALARSFLFGMDAEAAHELTMDMLARGQRTPLQWAWCNETVSDPIELAGLRFPNRVGLAAGLDKNARCIDALAAMGFGFVEVGTVTPRAQPGNPKPRMFRLPEARALINRLGFNNEGLDAFVANVQRSQVRTQGRGQSKLLLGLNIGKNATTPIEDATRDYLTCLEGVYPHADYVTVNISSPNTQNLRALQSDAALDCLLGAIAEHRGQLAAAQGRRVPIFVKIAPDLDEAQVAVIATTLQRHGMDGVVATNTTIRRDAVQGLRHAGETGGLSGAPVLEASNAVIRQLRAALGPAFPIIGVGGILSAEDAVSKIRAGADVVQIYTGLIYEGPALVGRAAKAIRDLR</sequence>